<reference key="1">
    <citation type="submission" date="1995-01" db="EMBL/GenBank/DDBJ databases">
        <title>Pathways regulating CL100 gene expression in pituitary cells.</title>
        <authorList>
            <person name="Muda M."/>
            <person name="Schlegel W."/>
            <person name="Arkinstall S."/>
        </authorList>
    </citation>
    <scope>NUCLEOTIDE SEQUENCE [MRNA]</scope>
    <source>
        <strain>Sprague-Dawley</strain>
        <tissue>Lung</tissue>
    </source>
</reference>
<reference key="2">
    <citation type="journal article" date="2001" name="J. Biol. Chem.">
        <title>MAP kinase phosphatase-1 gene transcription in rat neuroendocrine cells is modulated by a calcium-sensitive block to elongation in the first exon.</title>
        <authorList>
            <person name="Ryser S."/>
            <person name="Tortola S."/>
            <person name="van Haasteren G."/>
            <person name="Muda M."/>
            <person name="Li S."/>
            <person name="Schlegel W."/>
        </authorList>
    </citation>
    <scope>NUCLEOTIDE SEQUENCE [GENOMIC DNA]</scope>
    <source>
        <strain>Wistar Furth</strain>
    </source>
</reference>
<reference key="3">
    <citation type="journal article" date="1994" name="J. Biol. Chem.">
        <title>Isolation and characterization of a human dual specificity protein-tyrosine phosphatase gene.</title>
        <authorList>
            <person name="Kwak S.P."/>
            <person name="Hakes D.J."/>
            <person name="Martell K.J."/>
            <person name="Dixon J.E."/>
        </authorList>
    </citation>
    <scope>TISSUE SPECIFICITY</scope>
</reference>
<reference key="4">
    <citation type="journal article" date="2004" name="FEBS Lett.">
        <title>Mitogen-activated protein kinase phosphatase-1 (MKP-1): &gt;100-fold nocturnal and norepinephrine-induced changes in the rat pineal gland.</title>
        <authorList>
            <person name="Price D.M."/>
            <person name="Chik C.L."/>
            <person name="Terriff D."/>
            <person name="Weller J."/>
            <person name="Humphries A."/>
            <person name="Carter D.A."/>
            <person name="Klein D.C."/>
            <person name="Ho A.K."/>
        </authorList>
    </citation>
    <scope>TISSUE SPECIFICITY</scope>
    <scope>INDUCTION</scope>
</reference>
<reference key="5">
    <citation type="journal article" date="2009" name="J. Biol. Chem.">
        <title>Night/day changes in pineal expression of &gt;600 genes: central role of adrenergic/cAMP signaling.</title>
        <authorList>
            <person name="Bailey M.J."/>
            <person name="Coon S.L."/>
            <person name="Carter D.A."/>
            <person name="Humphries A."/>
            <person name="Kim J.S."/>
            <person name="Shi Q."/>
            <person name="Gaildrat P."/>
            <person name="Morin F."/>
            <person name="Ganguly S."/>
            <person name="Hogenesch J.B."/>
            <person name="Weller J.L."/>
            <person name="Rath M.F."/>
            <person name="Moller M."/>
            <person name="Baler R."/>
            <person name="Sugden D."/>
            <person name="Rangel Z.G."/>
            <person name="Munson P.J."/>
            <person name="Klein D.C."/>
        </authorList>
    </citation>
    <scope>TISSUE SPECIFICITY</scope>
    <scope>INDUCTION</scope>
</reference>
<organism>
    <name type="scientific">Rattus norvegicus</name>
    <name type="common">Rat</name>
    <dbReference type="NCBI Taxonomy" id="10116"/>
    <lineage>
        <taxon>Eukaryota</taxon>
        <taxon>Metazoa</taxon>
        <taxon>Chordata</taxon>
        <taxon>Craniata</taxon>
        <taxon>Vertebrata</taxon>
        <taxon>Euteleostomi</taxon>
        <taxon>Mammalia</taxon>
        <taxon>Eutheria</taxon>
        <taxon>Euarchontoglires</taxon>
        <taxon>Glires</taxon>
        <taxon>Rodentia</taxon>
        <taxon>Myomorpha</taxon>
        <taxon>Muroidea</taxon>
        <taxon>Muridae</taxon>
        <taxon>Murinae</taxon>
        <taxon>Rattus</taxon>
    </lineage>
</organism>
<evidence type="ECO:0000250" key="1">
    <source>
        <dbReference type="UniProtKB" id="P28563"/>
    </source>
</evidence>
<evidence type="ECO:0000250" key="2">
    <source>
        <dbReference type="UniProtKB" id="Q91790"/>
    </source>
</evidence>
<evidence type="ECO:0000255" key="3">
    <source>
        <dbReference type="PROSITE-ProRule" id="PRU00160"/>
    </source>
</evidence>
<evidence type="ECO:0000255" key="4">
    <source>
        <dbReference type="PROSITE-ProRule" id="PRU00173"/>
    </source>
</evidence>
<evidence type="ECO:0000255" key="5">
    <source>
        <dbReference type="PROSITE-ProRule" id="PRU10044"/>
    </source>
</evidence>
<evidence type="ECO:0000269" key="6">
    <source>
    </source>
</evidence>
<evidence type="ECO:0000269" key="7">
    <source>
    </source>
</evidence>
<evidence type="ECO:0000269" key="8">
    <source>
    </source>
</evidence>
<evidence type="ECO:0000305" key="9"/>
<evidence type="ECO:0000312" key="10">
    <source>
        <dbReference type="EMBL" id="CAA58828.1"/>
    </source>
</evidence>
<evidence type="ECO:0000312" key="11">
    <source>
        <dbReference type="RGD" id="620897"/>
    </source>
</evidence>
<feature type="chain" id="PRO_0000094792" description="Dual specificity protein phosphatase 1">
    <location>
        <begin position="1"/>
        <end position="367"/>
    </location>
</feature>
<feature type="domain" description="Rhodanese" evidence="4">
    <location>
        <begin position="20"/>
        <end position="137"/>
    </location>
</feature>
<feature type="domain" description="Tyrosine-protein phosphatase" evidence="3">
    <location>
        <begin position="173"/>
        <end position="314"/>
    </location>
</feature>
<feature type="active site" description="Phosphocysteine intermediate" evidence="3">
    <location>
        <position position="258"/>
    </location>
</feature>
<feature type="modified residue" description="Phosphoserine; by MAPK1 and MAPK3" evidence="1">
    <location>
        <position position="359"/>
    </location>
</feature>
<feature type="modified residue" description="Phosphoserine; by MAPK1 and MAPK3" evidence="1">
    <location>
        <position position="364"/>
    </location>
</feature>
<gene>
    <name evidence="11" type="primary">Dusp1</name>
    <name evidence="10" type="synonym">Cl100</name>
    <name type="synonym">Mkp1</name>
    <name type="synonym">Ptpn16</name>
</gene>
<name>DUS1_RAT</name>
<proteinExistence type="evidence at protein level"/>
<accession>Q64623</accession>
<accession>Q548G6</accession>
<dbReference type="EC" id="3.1.3.16" evidence="1"/>
<dbReference type="EC" id="3.1.3.48" evidence="1"/>
<dbReference type="EMBL" id="X84004">
    <property type="protein sequence ID" value="CAA58828.1"/>
    <property type="molecule type" value="mRNA"/>
</dbReference>
<dbReference type="EMBL" id="AF357203">
    <property type="protein sequence ID" value="AAK55327.1"/>
    <property type="molecule type" value="Genomic_DNA"/>
</dbReference>
<dbReference type="PIR" id="S52265">
    <property type="entry name" value="S52265"/>
</dbReference>
<dbReference type="RefSeq" id="NP_446221.2">
    <property type="nucleotide sequence ID" value="NM_053769.4"/>
</dbReference>
<dbReference type="SMR" id="Q64623"/>
<dbReference type="BioGRID" id="250421">
    <property type="interactions" value="1"/>
</dbReference>
<dbReference type="FunCoup" id="Q64623">
    <property type="interactions" value="383"/>
</dbReference>
<dbReference type="STRING" id="10116.ENSRNOP00000005383"/>
<dbReference type="PhosphoSitePlus" id="Q64623"/>
<dbReference type="PaxDb" id="10116-ENSRNOP00000005383"/>
<dbReference type="GeneID" id="114856"/>
<dbReference type="KEGG" id="rno:114856"/>
<dbReference type="UCSC" id="RGD:620897">
    <property type="organism name" value="rat"/>
</dbReference>
<dbReference type="AGR" id="RGD:620897"/>
<dbReference type="CTD" id="1843"/>
<dbReference type="RGD" id="620897">
    <property type="gene designation" value="Dusp1"/>
</dbReference>
<dbReference type="eggNOG" id="KOG1716">
    <property type="taxonomic scope" value="Eukaryota"/>
</dbReference>
<dbReference type="HOGENOM" id="CLU_027074_0_2_1"/>
<dbReference type="InParanoid" id="Q64623"/>
<dbReference type="OrthoDB" id="165342at2759"/>
<dbReference type="PhylomeDB" id="Q64623"/>
<dbReference type="TreeFam" id="TF105122"/>
<dbReference type="Reactome" id="R-RNO-112409">
    <property type="pathway name" value="RAF-independent MAPK1/3 activation"/>
</dbReference>
<dbReference type="Reactome" id="R-RNO-5675221">
    <property type="pathway name" value="Negative regulation of MAPK pathway"/>
</dbReference>
<dbReference type="PRO" id="PR:Q64623"/>
<dbReference type="Proteomes" id="UP000002494">
    <property type="component" value="Chromosome 10"/>
</dbReference>
<dbReference type="Bgee" id="ENSRNOG00000003977">
    <property type="expression patterns" value="Expressed in lung and 20 other cell types or tissues"/>
</dbReference>
<dbReference type="GO" id="GO:0005737">
    <property type="term" value="C:cytoplasm"/>
    <property type="evidence" value="ECO:0000250"/>
    <property type="project" value="UniProtKB"/>
</dbReference>
<dbReference type="GO" id="GO:0005634">
    <property type="term" value="C:nucleus"/>
    <property type="evidence" value="ECO:0000266"/>
    <property type="project" value="RGD"/>
</dbReference>
<dbReference type="GO" id="GO:0019838">
    <property type="term" value="F:growth factor binding"/>
    <property type="evidence" value="ECO:0000353"/>
    <property type="project" value="RGD"/>
</dbReference>
<dbReference type="GO" id="GO:0017017">
    <property type="term" value="F:MAP kinase tyrosine/serine/threonine phosphatase activity"/>
    <property type="evidence" value="ECO:0000250"/>
    <property type="project" value="UniProtKB"/>
</dbReference>
<dbReference type="GO" id="GO:0051019">
    <property type="term" value="F:mitogen-activated protein kinase binding"/>
    <property type="evidence" value="ECO:0000250"/>
    <property type="project" value="UniProtKB"/>
</dbReference>
<dbReference type="GO" id="GO:0004721">
    <property type="term" value="F:phosphoprotein phosphatase activity"/>
    <property type="evidence" value="ECO:0000318"/>
    <property type="project" value="GO_Central"/>
</dbReference>
<dbReference type="GO" id="GO:0004722">
    <property type="term" value="F:protein serine/threonine phosphatase activity"/>
    <property type="evidence" value="ECO:0000250"/>
    <property type="project" value="UniProtKB"/>
</dbReference>
<dbReference type="GO" id="GO:0004725">
    <property type="term" value="F:protein tyrosine phosphatase activity"/>
    <property type="evidence" value="ECO:0000250"/>
    <property type="project" value="UniProtKB"/>
</dbReference>
<dbReference type="GO" id="GO:0008138">
    <property type="term" value="F:protein tyrosine/serine/threonine phosphatase activity"/>
    <property type="evidence" value="ECO:0000266"/>
    <property type="project" value="RGD"/>
</dbReference>
<dbReference type="GO" id="GO:1990869">
    <property type="term" value="P:cellular response to chemokine"/>
    <property type="evidence" value="ECO:0000266"/>
    <property type="project" value="RGD"/>
</dbReference>
<dbReference type="GO" id="GO:0032870">
    <property type="term" value="P:cellular response to hormone stimulus"/>
    <property type="evidence" value="ECO:0000270"/>
    <property type="project" value="RGD"/>
</dbReference>
<dbReference type="GO" id="GO:0001706">
    <property type="term" value="P:endoderm formation"/>
    <property type="evidence" value="ECO:0000318"/>
    <property type="project" value="GO_Central"/>
</dbReference>
<dbReference type="GO" id="GO:0035556">
    <property type="term" value="P:intracellular signal transduction"/>
    <property type="evidence" value="ECO:0000314"/>
    <property type="project" value="RGD"/>
</dbReference>
<dbReference type="GO" id="GO:0043066">
    <property type="term" value="P:negative regulation of apoptotic process"/>
    <property type="evidence" value="ECO:0000315"/>
    <property type="project" value="RGD"/>
</dbReference>
<dbReference type="GO" id="GO:0007162">
    <property type="term" value="P:negative regulation of cell adhesion"/>
    <property type="evidence" value="ECO:0000266"/>
    <property type="project" value="RGD"/>
</dbReference>
<dbReference type="GO" id="GO:0008285">
    <property type="term" value="P:negative regulation of cell population proliferation"/>
    <property type="evidence" value="ECO:0000266"/>
    <property type="project" value="RGD"/>
</dbReference>
<dbReference type="GO" id="GO:2000279">
    <property type="term" value="P:negative regulation of DNA biosynthetic process"/>
    <property type="evidence" value="ECO:0000314"/>
    <property type="project" value="RGD"/>
</dbReference>
<dbReference type="GO" id="GO:0070373">
    <property type="term" value="P:negative regulation of ERK1 and ERK2 cascade"/>
    <property type="evidence" value="ECO:0000315"/>
    <property type="project" value="RGD"/>
</dbReference>
<dbReference type="GO" id="GO:0043407">
    <property type="term" value="P:negative regulation of MAP kinase activity"/>
    <property type="evidence" value="ECO:0000250"/>
    <property type="project" value="UniProtKB"/>
</dbReference>
<dbReference type="GO" id="GO:0043409">
    <property type="term" value="P:negative regulation of MAPK cascade"/>
    <property type="evidence" value="ECO:0000250"/>
    <property type="project" value="UniProtKB"/>
</dbReference>
<dbReference type="GO" id="GO:0051447">
    <property type="term" value="P:negative regulation of meiotic cell cycle"/>
    <property type="evidence" value="ECO:0000250"/>
    <property type="project" value="UniProtKB"/>
</dbReference>
<dbReference type="GO" id="GO:0090027">
    <property type="term" value="P:negative regulation of monocyte chemotaxis"/>
    <property type="evidence" value="ECO:0000266"/>
    <property type="project" value="RGD"/>
</dbReference>
<dbReference type="GO" id="GO:1903753">
    <property type="term" value="P:negative regulation of p38MAPK cascade"/>
    <property type="evidence" value="ECO:0000266"/>
    <property type="project" value="RGD"/>
</dbReference>
<dbReference type="GO" id="GO:0070262">
    <property type="term" value="P:peptidyl-serine dephosphorylation"/>
    <property type="evidence" value="ECO:0000250"/>
    <property type="project" value="UniProtKB"/>
</dbReference>
<dbReference type="GO" id="GO:0035970">
    <property type="term" value="P:peptidyl-threonine dephosphorylation"/>
    <property type="evidence" value="ECO:0000250"/>
    <property type="project" value="UniProtKB"/>
</dbReference>
<dbReference type="GO" id="GO:0035335">
    <property type="term" value="P:peptidyl-tyrosine dephosphorylation"/>
    <property type="evidence" value="ECO:0000250"/>
    <property type="project" value="UniProtKB"/>
</dbReference>
<dbReference type="GO" id="GO:0043065">
    <property type="term" value="P:positive regulation of apoptotic process"/>
    <property type="evidence" value="ECO:0000315"/>
    <property type="project" value="RGD"/>
</dbReference>
<dbReference type="GO" id="GO:0090266">
    <property type="term" value="P:regulation of mitotic cell cycle spindle assembly checkpoint"/>
    <property type="evidence" value="ECO:0000250"/>
    <property type="project" value="UniProtKB"/>
</dbReference>
<dbReference type="GO" id="GO:0051592">
    <property type="term" value="P:response to calcium ion"/>
    <property type="evidence" value="ECO:0000270"/>
    <property type="project" value="RGD"/>
</dbReference>
<dbReference type="GO" id="GO:0051591">
    <property type="term" value="P:response to cAMP"/>
    <property type="evidence" value="ECO:0000270"/>
    <property type="project" value="RGD"/>
</dbReference>
<dbReference type="GO" id="GO:0032355">
    <property type="term" value="P:response to estradiol"/>
    <property type="evidence" value="ECO:0000270"/>
    <property type="project" value="RGD"/>
</dbReference>
<dbReference type="GO" id="GO:0051384">
    <property type="term" value="P:response to glucocorticoid"/>
    <property type="evidence" value="ECO:0000270"/>
    <property type="project" value="RGD"/>
</dbReference>
<dbReference type="GO" id="GO:0042542">
    <property type="term" value="P:response to hydrogen peroxide"/>
    <property type="evidence" value="ECO:0000270"/>
    <property type="project" value="RGD"/>
</dbReference>
<dbReference type="GO" id="GO:0009416">
    <property type="term" value="P:response to light stimulus"/>
    <property type="evidence" value="ECO:0000270"/>
    <property type="project" value="RGD"/>
</dbReference>
<dbReference type="GO" id="GO:0032526">
    <property type="term" value="P:response to retinoic acid"/>
    <property type="evidence" value="ECO:0000270"/>
    <property type="project" value="RGD"/>
</dbReference>
<dbReference type="GO" id="GO:0033574">
    <property type="term" value="P:response to testosterone"/>
    <property type="evidence" value="ECO:0000270"/>
    <property type="project" value="RGD"/>
</dbReference>
<dbReference type="GO" id="GO:0007165">
    <property type="term" value="P:signal transduction"/>
    <property type="evidence" value="ECO:0000318"/>
    <property type="project" value="GO_Central"/>
</dbReference>
<dbReference type="CDD" id="cd14638">
    <property type="entry name" value="DSP_DUSP1"/>
    <property type="match status" value="1"/>
</dbReference>
<dbReference type="CDD" id="cd01446">
    <property type="entry name" value="DSP_MapKP"/>
    <property type="match status" value="1"/>
</dbReference>
<dbReference type="FunFam" id="3.90.190.10:FF:000015">
    <property type="entry name" value="Dual specificity phosphatase 4"/>
    <property type="match status" value="1"/>
</dbReference>
<dbReference type="FunFam" id="3.40.250.10:FF:000026">
    <property type="entry name" value="Dual specificity protein phosphatase"/>
    <property type="match status" value="1"/>
</dbReference>
<dbReference type="Gene3D" id="3.90.190.10">
    <property type="entry name" value="Protein tyrosine phosphatase superfamily"/>
    <property type="match status" value="1"/>
</dbReference>
<dbReference type="Gene3D" id="3.40.250.10">
    <property type="entry name" value="Rhodanese-like domain"/>
    <property type="match status" value="1"/>
</dbReference>
<dbReference type="InterPro" id="IPR020420">
    <property type="entry name" value="Atypical_DUSP_subfamB"/>
</dbReference>
<dbReference type="InterPro" id="IPR000340">
    <property type="entry name" value="Dual-sp_phosphatase_cat-dom"/>
</dbReference>
<dbReference type="InterPro" id="IPR008343">
    <property type="entry name" value="MKP"/>
</dbReference>
<dbReference type="InterPro" id="IPR029021">
    <property type="entry name" value="Prot-tyrosine_phosphatase-like"/>
</dbReference>
<dbReference type="InterPro" id="IPR001763">
    <property type="entry name" value="Rhodanese-like_dom"/>
</dbReference>
<dbReference type="InterPro" id="IPR036873">
    <property type="entry name" value="Rhodanese-like_dom_sf"/>
</dbReference>
<dbReference type="InterPro" id="IPR016130">
    <property type="entry name" value="Tyr_Pase_AS"/>
</dbReference>
<dbReference type="InterPro" id="IPR003595">
    <property type="entry name" value="Tyr_Pase_cat"/>
</dbReference>
<dbReference type="InterPro" id="IPR000387">
    <property type="entry name" value="Tyr_Pase_dom"/>
</dbReference>
<dbReference type="InterPro" id="IPR020422">
    <property type="entry name" value="TYR_PHOSPHATASE_DUAL_dom"/>
</dbReference>
<dbReference type="PANTHER" id="PTHR10159">
    <property type="entry name" value="DUAL SPECIFICITY PROTEIN PHOSPHATASE"/>
    <property type="match status" value="1"/>
</dbReference>
<dbReference type="PANTHER" id="PTHR10159:SF309">
    <property type="entry name" value="DUAL SPECIFICITY PROTEIN PHOSPHATASE 1"/>
    <property type="match status" value="1"/>
</dbReference>
<dbReference type="Pfam" id="PF00782">
    <property type="entry name" value="DSPc"/>
    <property type="match status" value="1"/>
</dbReference>
<dbReference type="Pfam" id="PF00581">
    <property type="entry name" value="Rhodanese"/>
    <property type="match status" value="1"/>
</dbReference>
<dbReference type="PIRSF" id="PIRSF000939">
    <property type="entry name" value="MAPK_Ptase"/>
    <property type="match status" value="1"/>
</dbReference>
<dbReference type="PRINTS" id="PR01908">
    <property type="entry name" value="ADSPHPHTASE"/>
</dbReference>
<dbReference type="PRINTS" id="PR01910">
    <property type="entry name" value="ADSPHPHTASEB"/>
</dbReference>
<dbReference type="PRINTS" id="PR01764">
    <property type="entry name" value="MAPKPHPHTASE"/>
</dbReference>
<dbReference type="SMART" id="SM00195">
    <property type="entry name" value="DSPc"/>
    <property type="match status" value="1"/>
</dbReference>
<dbReference type="SMART" id="SM00404">
    <property type="entry name" value="PTPc_motif"/>
    <property type="match status" value="1"/>
</dbReference>
<dbReference type="SMART" id="SM00450">
    <property type="entry name" value="RHOD"/>
    <property type="match status" value="1"/>
</dbReference>
<dbReference type="SUPFAM" id="SSF52799">
    <property type="entry name" value="(Phosphotyrosine protein) phosphatases II"/>
    <property type="match status" value="1"/>
</dbReference>
<dbReference type="SUPFAM" id="SSF52821">
    <property type="entry name" value="Rhodanese/Cell cycle control phosphatase"/>
    <property type="match status" value="1"/>
</dbReference>
<dbReference type="PROSITE" id="PS50206">
    <property type="entry name" value="RHODANESE_3"/>
    <property type="match status" value="1"/>
</dbReference>
<dbReference type="PROSITE" id="PS00383">
    <property type="entry name" value="TYR_PHOSPHATASE_1"/>
    <property type="match status" value="1"/>
</dbReference>
<dbReference type="PROSITE" id="PS50056">
    <property type="entry name" value="TYR_PHOSPHATASE_2"/>
    <property type="match status" value="1"/>
</dbReference>
<dbReference type="PROSITE" id="PS50054">
    <property type="entry name" value="TYR_PHOSPHATASE_DUAL"/>
    <property type="match status" value="1"/>
</dbReference>
<comment type="function">
    <text evidence="1">Dual specificity phosphatase that dephosphorylates MAP kinase MAPK1/ERK2 on both 'Thr-183' and 'Tyr-185', regulating its activity during the meiotic cell cycle.</text>
</comment>
<comment type="catalytic activity">
    <reaction evidence="1 5">
        <text>O-phospho-L-tyrosyl-[protein] + H2O = L-tyrosyl-[protein] + phosphate</text>
        <dbReference type="Rhea" id="RHEA:10684"/>
        <dbReference type="Rhea" id="RHEA-COMP:10136"/>
        <dbReference type="Rhea" id="RHEA-COMP:20101"/>
        <dbReference type="ChEBI" id="CHEBI:15377"/>
        <dbReference type="ChEBI" id="CHEBI:43474"/>
        <dbReference type="ChEBI" id="CHEBI:46858"/>
        <dbReference type="ChEBI" id="CHEBI:61978"/>
        <dbReference type="EC" id="3.1.3.48"/>
    </reaction>
</comment>
<comment type="catalytic activity">
    <reaction evidence="1">
        <text>O-phospho-L-seryl-[protein] + H2O = L-seryl-[protein] + phosphate</text>
        <dbReference type="Rhea" id="RHEA:20629"/>
        <dbReference type="Rhea" id="RHEA-COMP:9863"/>
        <dbReference type="Rhea" id="RHEA-COMP:11604"/>
        <dbReference type="ChEBI" id="CHEBI:15377"/>
        <dbReference type="ChEBI" id="CHEBI:29999"/>
        <dbReference type="ChEBI" id="CHEBI:43474"/>
        <dbReference type="ChEBI" id="CHEBI:83421"/>
        <dbReference type="EC" id="3.1.3.16"/>
    </reaction>
</comment>
<comment type="catalytic activity">
    <reaction evidence="1">
        <text>O-phospho-L-threonyl-[protein] + H2O = L-threonyl-[protein] + phosphate</text>
        <dbReference type="Rhea" id="RHEA:47004"/>
        <dbReference type="Rhea" id="RHEA-COMP:11060"/>
        <dbReference type="Rhea" id="RHEA-COMP:11605"/>
        <dbReference type="ChEBI" id="CHEBI:15377"/>
        <dbReference type="ChEBI" id="CHEBI:30013"/>
        <dbReference type="ChEBI" id="CHEBI:43474"/>
        <dbReference type="ChEBI" id="CHEBI:61977"/>
        <dbReference type="EC" id="3.1.3.16"/>
    </reaction>
</comment>
<comment type="subcellular location">
    <subcellularLocation>
        <location evidence="2">Nucleus</location>
    </subcellularLocation>
</comment>
<comment type="tissue specificity">
    <text evidence="6 7 8">Brain. High level expression seen in the cingulate gyrus within the retrospinal cortex, ventral and medial divisions of the anterior thalamus and the medial geniculate nucleus. Expressed at moderate levels in the parietal and temporal cortex. Expressed in the cerebellum.</text>
</comment>
<comment type="induction">
    <text evidence="6 7">Exhibits night/day variations with a 100-fold increased expression at night in the pineal gland (at protein level). Up-regulation is due to a large degree to the release of norepinephrine from nerve terminals in the pineal gland and cAMP signaling pathway.</text>
</comment>
<comment type="PTM">
    <text evidence="1">Phosphorylation at Ser-359 and Ser-364 by MAPK1/ERK2 and MAPK3/ERK1 reduces its rate of degradation.</text>
</comment>
<comment type="PTM">
    <text evidence="2">'Lys-48'-linked polyubiquitinated by NEURL3, leading to proteasomal degradation.</text>
</comment>
<comment type="similarity">
    <text evidence="9">Belongs to the protein-tyrosine phosphatase family. Non-receptor class dual specificity subfamily.</text>
</comment>
<keyword id="KW-0131">Cell cycle</keyword>
<keyword id="KW-0378">Hydrolase</keyword>
<keyword id="KW-0539">Nucleus</keyword>
<keyword id="KW-0597">Phosphoprotein</keyword>
<keyword id="KW-0904">Protein phosphatase</keyword>
<keyword id="KW-1185">Reference proteome</keyword>
<keyword id="KW-0832">Ubl conjugation</keyword>
<sequence length="367" mass="39541">MVMEVGILDAGGLRALLRERAAQCLLLDCRSFFAFNAGHIVGSVNVRFSTIVRRRAKGAMGLEHIVPNTELRGRLLAGAYHAVVLLDERSAALDGAKRDGTLALAAGALCREARSTQVFFLQGGYEAFSASCPELCSKQSTPMGLSLPLSTSVPDSAESGCSSCSTPLYDQGGPVEILSFLYLGSAYHASRKDMLDALGITALINVSANCPNHFEGHYQYKSIPVEDNHKADISSWFNEAIDFIDSIKDAGGRVFVHCQAGISRSATICLAYLMRTNRVKLDEAFEFVKQRRSIISPNFSFMGQLLQFESQVLAPHCSAEAGSPAMAVLDRGTSTTTVFNFPVSIPVHPTNSALNYLQSPITTSPSC</sequence>
<protein>
    <recommendedName>
        <fullName evidence="9">Dual specificity protein phosphatase 1</fullName>
        <ecNumber evidence="1">3.1.3.16</ecNumber>
        <ecNumber evidence="1">3.1.3.48</ecNumber>
    </recommendedName>
    <alternativeName>
        <fullName>Mitogen-activated protein kinase phosphatase 1</fullName>
        <shortName>MAP kinase phosphatase 1</shortName>
        <shortName>MKP-1</shortName>
    </alternativeName>
    <alternativeName>
        <fullName evidence="10">Protein-tyrosine phosphatase CL100</fullName>
    </alternativeName>
    <alternativeName>
        <fullName>Protein-tyrosine phosphatase non-receptor type 16</fullName>
    </alternativeName>
</protein>